<keyword id="KW-0004">4Fe-4S</keyword>
<keyword id="KW-0963">Cytoplasm</keyword>
<keyword id="KW-0408">Iron</keyword>
<keyword id="KW-0411">Iron-sulfur</keyword>
<keyword id="KW-0479">Metal-binding</keyword>
<keyword id="KW-0949">S-adenosyl-L-methionine</keyword>
<keyword id="KW-0808">Transferase</keyword>
<keyword id="KW-0819">tRNA processing</keyword>
<dbReference type="EC" id="2.8.4.3" evidence="1"/>
<dbReference type="EMBL" id="CP000393">
    <property type="protein sequence ID" value="ABG49845.1"/>
    <property type="molecule type" value="Genomic_DNA"/>
</dbReference>
<dbReference type="RefSeq" id="WP_011610241.1">
    <property type="nucleotide sequence ID" value="NC_008312.1"/>
</dbReference>
<dbReference type="SMR" id="Q119H9"/>
<dbReference type="STRING" id="203124.Tery_0377"/>
<dbReference type="KEGG" id="ter:Tery_0377"/>
<dbReference type="eggNOG" id="COG0621">
    <property type="taxonomic scope" value="Bacteria"/>
</dbReference>
<dbReference type="HOGENOM" id="CLU_018697_2_2_3"/>
<dbReference type="OrthoDB" id="9805215at2"/>
<dbReference type="GO" id="GO:0005737">
    <property type="term" value="C:cytoplasm"/>
    <property type="evidence" value="ECO:0007669"/>
    <property type="project" value="UniProtKB-SubCell"/>
</dbReference>
<dbReference type="GO" id="GO:0051539">
    <property type="term" value="F:4 iron, 4 sulfur cluster binding"/>
    <property type="evidence" value="ECO:0007669"/>
    <property type="project" value="UniProtKB-UniRule"/>
</dbReference>
<dbReference type="GO" id="GO:0046872">
    <property type="term" value="F:metal ion binding"/>
    <property type="evidence" value="ECO:0007669"/>
    <property type="project" value="UniProtKB-KW"/>
</dbReference>
<dbReference type="GO" id="GO:0035596">
    <property type="term" value="F:methylthiotransferase activity"/>
    <property type="evidence" value="ECO:0007669"/>
    <property type="project" value="InterPro"/>
</dbReference>
<dbReference type="GO" id="GO:0035600">
    <property type="term" value="P:tRNA methylthiolation"/>
    <property type="evidence" value="ECO:0007669"/>
    <property type="project" value="TreeGrafter"/>
</dbReference>
<dbReference type="CDD" id="cd01335">
    <property type="entry name" value="Radical_SAM"/>
    <property type="match status" value="1"/>
</dbReference>
<dbReference type="FunFam" id="3.40.50.12160:FF:000006">
    <property type="entry name" value="tRNA-2-methylthio-N(6)-dimethylallyladenosine synthase"/>
    <property type="match status" value="1"/>
</dbReference>
<dbReference type="FunFam" id="3.80.30.20:FF:000001">
    <property type="entry name" value="tRNA-2-methylthio-N(6)-dimethylallyladenosine synthase 2"/>
    <property type="match status" value="1"/>
</dbReference>
<dbReference type="Gene3D" id="3.40.50.12160">
    <property type="entry name" value="Methylthiotransferase, N-terminal domain"/>
    <property type="match status" value="1"/>
</dbReference>
<dbReference type="Gene3D" id="3.80.30.20">
    <property type="entry name" value="tm_1862 like domain"/>
    <property type="match status" value="1"/>
</dbReference>
<dbReference type="HAMAP" id="MF_01864">
    <property type="entry name" value="tRNA_metthiotr_MiaB"/>
    <property type="match status" value="1"/>
</dbReference>
<dbReference type="InterPro" id="IPR006638">
    <property type="entry name" value="Elp3/MiaA/NifB-like_rSAM"/>
</dbReference>
<dbReference type="InterPro" id="IPR005839">
    <property type="entry name" value="Methylthiotransferase"/>
</dbReference>
<dbReference type="InterPro" id="IPR020612">
    <property type="entry name" value="Methylthiotransferase_CS"/>
</dbReference>
<dbReference type="InterPro" id="IPR013848">
    <property type="entry name" value="Methylthiotransferase_N"/>
</dbReference>
<dbReference type="InterPro" id="IPR038135">
    <property type="entry name" value="Methylthiotransferase_N_sf"/>
</dbReference>
<dbReference type="InterPro" id="IPR006463">
    <property type="entry name" value="MiaB_methiolase"/>
</dbReference>
<dbReference type="InterPro" id="IPR007197">
    <property type="entry name" value="rSAM"/>
</dbReference>
<dbReference type="InterPro" id="IPR023404">
    <property type="entry name" value="rSAM_horseshoe"/>
</dbReference>
<dbReference type="InterPro" id="IPR002792">
    <property type="entry name" value="TRAM_dom"/>
</dbReference>
<dbReference type="NCBIfam" id="TIGR01574">
    <property type="entry name" value="miaB-methiolase"/>
    <property type="match status" value="1"/>
</dbReference>
<dbReference type="NCBIfam" id="TIGR00089">
    <property type="entry name" value="MiaB/RimO family radical SAM methylthiotransferase"/>
    <property type="match status" value="1"/>
</dbReference>
<dbReference type="PANTHER" id="PTHR43020">
    <property type="entry name" value="CDK5 REGULATORY SUBUNIT-ASSOCIATED PROTEIN 1"/>
    <property type="match status" value="1"/>
</dbReference>
<dbReference type="PANTHER" id="PTHR43020:SF2">
    <property type="entry name" value="MITOCHONDRIAL TRNA METHYLTHIOTRANSFERASE CDK5RAP1"/>
    <property type="match status" value="1"/>
</dbReference>
<dbReference type="Pfam" id="PF04055">
    <property type="entry name" value="Radical_SAM"/>
    <property type="match status" value="1"/>
</dbReference>
<dbReference type="Pfam" id="PF01938">
    <property type="entry name" value="TRAM"/>
    <property type="match status" value="1"/>
</dbReference>
<dbReference type="Pfam" id="PF00919">
    <property type="entry name" value="UPF0004"/>
    <property type="match status" value="1"/>
</dbReference>
<dbReference type="SFLD" id="SFLDF00273">
    <property type="entry name" value="(dimethylallyl)adenosine_tRNA"/>
    <property type="match status" value="1"/>
</dbReference>
<dbReference type="SFLD" id="SFLDG01082">
    <property type="entry name" value="B12-binding_domain_containing"/>
    <property type="match status" value="1"/>
</dbReference>
<dbReference type="SFLD" id="SFLDG01061">
    <property type="entry name" value="methylthiotransferase"/>
    <property type="match status" value="1"/>
</dbReference>
<dbReference type="SMART" id="SM00729">
    <property type="entry name" value="Elp3"/>
    <property type="match status" value="1"/>
</dbReference>
<dbReference type="SUPFAM" id="SSF102114">
    <property type="entry name" value="Radical SAM enzymes"/>
    <property type="match status" value="1"/>
</dbReference>
<dbReference type="PROSITE" id="PS51449">
    <property type="entry name" value="MTTASE_N"/>
    <property type="match status" value="1"/>
</dbReference>
<dbReference type="PROSITE" id="PS01278">
    <property type="entry name" value="MTTASE_RADICAL"/>
    <property type="match status" value="1"/>
</dbReference>
<dbReference type="PROSITE" id="PS51918">
    <property type="entry name" value="RADICAL_SAM"/>
    <property type="match status" value="1"/>
</dbReference>
<dbReference type="PROSITE" id="PS50926">
    <property type="entry name" value="TRAM"/>
    <property type="match status" value="1"/>
</dbReference>
<organism>
    <name type="scientific">Trichodesmium erythraeum (strain IMS101)</name>
    <dbReference type="NCBI Taxonomy" id="203124"/>
    <lineage>
        <taxon>Bacteria</taxon>
        <taxon>Bacillati</taxon>
        <taxon>Cyanobacteriota</taxon>
        <taxon>Cyanophyceae</taxon>
        <taxon>Oscillatoriophycideae</taxon>
        <taxon>Oscillatoriales</taxon>
        <taxon>Microcoleaceae</taxon>
        <taxon>Trichodesmium</taxon>
    </lineage>
</organism>
<proteinExistence type="inferred from homology"/>
<evidence type="ECO:0000255" key="1">
    <source>
        <dbReference type="HAMAP-Rule" id="MF_01864"/>
    </source>
</evidence>
<evidence type="ECO:0000255" key="2">
    <source>
        <dbReference type="PROSITE-ProRule" id="PRU01266"/>
    </source>
</evidence>
<sequence>MNTNNRHYHITTFGCQMNKADSERMAGILDNMGLISSEDPNKADIILYNTCTIRDNAEQKVYSYLGRQAKRKHKQPDLTLIVAGCVAQQEGAALLRRVPELDLIMGPQHANRLQDLLEQVFNGNQVVATEPIHIVEDITKPRRDSKITAWVNIIYGCNEHCTYCVVPSVRGVEQSRTPEAIRAEMEELGRQGYQEITLLGQNIDAYGRDLPGVTKEGRNKYTFTDLLYYVHDVPGVERIRFATSHPRYFTERLIRACAELPKVCEHFHIPFQSGDNKLLKAMARGYTHEKYRRIIDKIRELMPDASISADAIVGFPGETEAQFENTLKLVEDIGFDQLNTAAYSPRPGTPAALWENQLGEEVKSDRLQRLNHLVGVKAADRSQRYMGRIEEVLVEDMNPKNAAQVMGRTRGNRLTFFEGDIAQLKGKLVKVKITEVRPFSLTGEVKEFVLV</sequence>
<comment type="function">
    <text evidence="1">Catalyzes the methylthiolation of N6-(dimethylallyl)adenosine (i(6)A), leading to the formation of 2-methylthio-N6-(dimethylallyl)adenosine (ms(2)i(6)A) at position 37 in tRNAs that read codons beginning with uridine.</text>
</comment>
<comment type="catalytic activity">
    <reaction evidence="1">
        <text>N(6)-dimethylallyladenosine(37) in tRNA + (sulfur carrier)-SH + AH2 + 2 S-adenosyl-L-methionine = 2-methylsulfanyl-N(6)-dimethylallyladenosine(37) in tRNA + (sulfur carrier)-H + 5'-deoxyadenosine + L-methionine + A + S-adenosyl-L-homocysteine + 2 H(+)</text>
        <dbReference type="Rhea" id="RHEA:37067"/>
        <dbReference type="Rhea" id="RHEA-COMP:10375"/>
        <dbReference type="Rhea" id="RHEA-COMP:10376"/>
        <dbReference type="Rhea" id="RHEA-COMP:14737"/>
        <dbReference type="Rhea" id="RHEA-COMP:14739"/>
        <dbReference type="ChEBI" id="CHEBI:13193"/>
        <dbReference type="ChEBI" id="CHEBI:15378"/>
        <dbReference type="ChEBI" id="CHEBI:17319"/>
        <dbReference type="ChEBI" id="CHEBI:17499"/>
        <dbReference type="ChEBI" id="CHEBI:29917"/>
        <dbReference type="ChEBI" id="CHEBI:57844"/>
        <dbReference type="ChEBI" id="CHEBI:57856"/>
        <dbReference type="ChEBI" id="CHEBI:59789"/>
        <dbReference type="ChEBI" id="CHEBI:64428"/>
        <dbReference type="ChEBI" id="CHEBI:74415"/>
        <dbReference type="ChEBI" id="CHEBI:74417"/>
        <dbReference type="EC" id="2.8.4.3"/>
    </reaction>
</comment>
<comment type="cofactor">
    <cofactor evidence="1">
        <name>[4Fe-4S] cluster</name>
        <dbReference type="ChEBI" id="CHEBI:49883"/>
    </cofactor>
    <text evidence="1">Binds 2 [4Fe-4S] clusters. One cluster is coordinated with 3 cysteines and an exchangeable S-adenosyl-L-methionine.</text>
</comment>
<comment type="subunit">
    <text evidence="1">Monomer.</text>
</comment>
<comment type="subcellular location">
    <subcellularLocation>
        <location evidence="1">Cytoplasm</location>
    </subcellularLocation>
</comment>
<comment type="similarity">
    <text evidence="1">Belongs to the methylthiotransferase family. MiaB subfamily.</text>
</comment>
<protein>
    <recommendedName>
        <fullName evidence="1">tRNA-2-methylthio-N(6)-dimethylallyladenosine synthase</fullName>
        <ecNumber evidence="1">2.8.4.3</ecNumber>
    </recommendedName>
    <alternativeName>
        <fullName evidence="1">(Dimethylallyl)adenosine tRNA methylthiotransferase MiaB</fullName>
    </alternativeName>
    <alternativeName>
        <fullName evidence="1">tRNA-i(6)A37 methylthiotransferase</fullName>
    </alternativeName>
</protein>
<gene>
    <name evidence="1" type="primary">miaB</name>
    <name type="ordered locus">Tery_0377</name>
</gene>
<accession>Q119H9</accession>
<reference key="1">
    <citation type="journal article" date="2015" name="Proc. Natl. Acad. Sci. U.S.A.">
        <title>Trichodesmium genome maintains abundant, widespread noncoding DNA in situ, despite oligotrophic lifestyle.</title>
        <authorList>
            <person name="Walworth N."/>
            <person name="Pfreundt U."/>
            <person name="Nelson W.C."/>
            <person name="Mincer T."/>
            <person name="Heidelberg J.F."/>
            <person name="Fu F."/>
            <person name="Waterbury J.B."/>
            <person name="Glavina del Rio T."/>
            <person name="Goodwin L."/>
            <person name="Kyrpides N.C."/>
            <person name="Land M.L."/>
            <person name="Woyke T."/>
            <person name="Hutchins D.A."/>
            <person name="Hess W.R."/>
            <person name="Webb E.A."/>
        </authorList>
    </citation>
    <scope>NUCLEOTIDE SEQUENCE [LARGE SCALE GENOMIC DNA]</scope>
    <source>
        <strain>IMS101</strain>
    </source>
</reference>
<feature type="chain" id="PRO_0000374623" description="tRNA-2-methylthio-N(6)-dimethylallyladenosine synthase">
    <location>
        <begin position="1"/>
        <end position="451"/>
    </location>
</feature>
<feature type="domain" description="MTTase N-terminal" evidence="1">
    <location>
        <begin position="6"/>
        <end position="122"/>
    </location>
</feature>
<feature type="domain" description="Radical SAM core" evidence="2">
    <location>
        <begin position="143"/>
        <end position="380"/>
    </location>
</feature>
<feature type="domain" description="TRAM" evidence="1">
    <location>
        <begin position="383"/>
        <end position="447"/>
    </location>
</feature>
<feature type="binding site" evidence="1">
    <location>
        <position position="15"/>
    </location>
    <ligand>
        <name>[4Fe-4S] cluster</name>
        <dbReference type="ChEBI" id="CHEBI:49883"/>
        <label>1</label>
    </ligand>
</feature>
<feature type="binding site" evidence="1">
    <location>
        <position position="51"/>
    </location>
    <ligand>
        <name>[4Fe-4S] cluster</name>
        <dbReference type="ChEBI" id="CHEBI:49883"/>
        <label>1</label>
    </ligand>
</feature>
<feature type="binding site" evidence="1">
    <location>
        <position position="85"/>
    </location>
    <ligand>
        <name>[4Fe-4S] cluster</name>
        <dbReference type="ChEBI" id="CHEBI:49883"/>
        <label>1</label>
    </ligand>
</feature>
<feature type="binding site" evidence="1">
    <location>
        <position position="157"/>
    </location>
    <ligand>
        <name>[4Fe-4S] cluster</name>
        <dbReference type="ChEBI" id="CHEBI:49883"/>
        <label>2</label>
        <note>4Fe-4S-S-AdoMet</note>
    </ligand>
</feature>
<feature type="binding site" evidence="1">
    <location>
        <position position="161"/>
    </location>
    <ligand>
        <name>[4Fe-4S] cluster</name>
        <dbReference type="ChEBI" id="CHEBI:49883"/>
        <label>2</label>
        <note>4Fe-4S-S-AdoMet</note>
    </ligand>
</feature>
<feature type="binding site" evidence="1">
    <location>
        <position position="164"/>
    </location>
    <ligand>
        <name>[4Fe-4S] cluster</name>
        <dbReference type="ChEBI" id="CHEBI:49883"/>
        <label>2</label>
        <note>4Fe-4S-S-AdoMet</note>
    </ligand>
</feature>
<name>MIAB_TRIEI</name>